<evidence type="ECO:0000250" key="1"/>
<evidence type="ECO:0000305" key="2"/>
<comment type="function">
    <text>Tachykinins are active peptides which excite neurons, evoke behavioral responses, are potent vasodilators and secretagogues, and contract (directly or indirectly) many smooth muscles.</text>
</comment>
<comment type="subcellular location">
    <subcellularLocation>
        <location>Secreted</location>
    </subcellularLocation>
</comment>
<comment type="similarity">
    <text evidence="2">Belongs to the tachykinin family.</text>
</comment>
<protein>
    <recommendedName>
        <fullName>Substance P</fullName>
    </recommendedName>
</protein>
<sequence length="11" mass="1315">KPRPQQFIGLM</sequence>
<keyword id="KW-0027">Amidation</keyword>
<keyword id="KW-0903">Direct protein sequencing</keyword>
<keyword id="KW-0527">Neuropeptide</keyword>
<keyword id="KW-0529">Neurotransmitter</keyword>
<keyword id="KW-1185">Reference proteome</keyword>
<keyword id="KW-0964">Secreted</keyword>
<accession>P28498</accession>
<reference key="1">
    <citation type="journal article" date="1992" name="Eur. J. Biochem.">
        <title>Substance-P-related and neurokinin-A-related peptides from the brain of the cod and trout.</title>
        <authorList>
            <person name="Jensen J."/>
            <person name="Conlon J.M."/>
        </authorList>
    </citation>
    <scope>PROTEIN SEQUENCE</scope>
    <source>
        <tissue>Brain</tissue>
    </source>
</reference>
<name>TKNA_GADMO</name>
<proteinExistence type="evidence at protein level"/>
<dbReference type="PIR" id="S23306">
    <property type="entry name" value="S23306"/>
</dbReference>
<dbReference type="Proteomes" id="UP000694546">
    <property type="component" value="Unplaced"/>
</dbReference>
<dbReference type="GO" id="GO:0005576">
    <property type="term" value="C:extracellular region"/>
    <property type="evidence" value="ECO:0007669"/>
    <property type="project" value="UniProtKB-SubCell"/>
</dbReference>
<dbReference type="GO" id="GO:0045202">
    <property type="term" value="C:synapse"/>
    <property type="evidence" value="ECO:0007669"/>
    <property type="project" value="GOC"/>
</dbReference>
<dbReference type="GO" id="GO:0007268">
    <property type="term" value="P:chemical synaptic transmission"/>
    <property type="evidence" value="ECO:0007669"/>
    <property type="project" value="UniProtKB-KW"/>
</dbReference>
<dbReference type="GO" id="GO:0007218">
    <property type="term" value="P:neuropeptide signaling pathway"/>
    <property type="evidence" value="ECO:0007669"/>
    <property type="project" value="UniProtKB-KW"/>
</dbReference>
<dbReference type="InterPro" id="IPR013055">
    <property type="entry name" value="Tachy_Neuro_lke_CS"/>
</dbReference>
<dbReference type="PROSITE" id="PS00267">
    <property type="entry name" value="TACHYKININ"/>
    <property type="match status" value="1"/>
</dbReference>
<feature type="peptide" id="PRO_0000044422" description="Substance P">
    <location>
        <begin position="1"/>
        <end position="11"/>
    </location>
</feature>
<feature type="modified residue" description="Methionine amide" evidence="1">
    <location>
        <position position="11"/>
    </location>
</feature>
<organism>
    <name type="scientific">Gadus morhua</name>
    <name type="common">Atlantic cod</name>
    <dbReference type="NCBI Taxonomy" id="8049"/>
    <lineage>
        <taxon>Eukaryota</taxon>
        <taxon>Metazoa</taxon>
        <taxon>Chordata</taxon>
        <taxon>Craniata</taxon>
        <taxon>Vertebrata</taxon>
        <taxon>Euteleostomi</taxon>
        <taxon>Actinopterygii</taxon>
        <taxon>Neopterygii</taxon>
        <taxon>Teleostei</taxon>
        <taxon>Neoteleostei</taxon>
        <taxon>Acanthomorphata</taxon>
        <taxon>Zeiogadaria</taxon>
        <taxon>Gadariae</taxon>
        <taxon>Gadiformes</taxon>
        <taxon>Gadoidei</taxon>
        <taxon>Gadidae</taxon>
        <taxon>Gadus</taxon>
    </lineage>
</organism>